<evidence type="ECO:0000255" key="1">
    <source>
        <dbReference type="PROSITE-ProRule" id="PRU00433"/>
    </source>
</evidence>
<evidence type="ECO:0000269" key="2">
    <source>
    </source>
</evidence>
<evidence type="ECO:0000305" key="3"/>
<reference key="1">
    <citation type="journal article" date="1971" name="Biochem. J.">
        <title>The amino acid sequence of cytochrome c from Abutilon theophrasti Medic. and Gossypium barbadense L. (cotton).</title>
        <authorList>
            <person name="Thompson E.W."/>
            <person name="Notton B.A."/>
            <person name="Richardson M."/>
            <person name="Boulter D."/>
        </authorList>
    </citation>
    <scope>PROTEIN SEQUENCE</scope>
    <scope>ACETYLATION AT ALA-1</scope>
    <scope>METHYLATION AT LYS-80 AND LYS-94</scope>
</reference>
<comment type="function">
    <text>Electron carrier protein. The oxidized form of the cytochrome c heme group can accept an electron from the heme group of the cytochrome c1 subunit of cytochrome reductase. Cytochrome c then transfers this electron to the cytochrome oxidase complex, the final protein carrier in the mitochondrial electron-transport chain.</text>
</comment>
<comment type="subcellular location">
    <subcellularLocation>
        <location>Mitochondrion intermembrane space</location>
    </subcellularLocation>
    <text>Loosely associated with the inner membrane.</text>
</comment>
<comment type="PTM">
    <text>Binds 1 heme c group covalently per subunit.</text>
</comment>
<comment type="similarity">
    <text evidence="3">Belongs to the cytochrome c family.</text>
</comment>
<comment type="online information" name="Protein Spotlight">
    <link uri="https://www.proteinspotlight.org/back_issues/076"/>
    <text>Life shuttle - Issue 76 of November 2006</text>
</comment>
<keyword id="KW-0007">Acetylation</keyword>
<keyword id="KW-0903">Direct protein sequencing</keyword>
<keyword id="KW-0249">Electron transport</keyword>
<keyword id="KW-0349">Heme</keyword>
<keyword id="KW-0408">Iron</keyword>
<keyword id="KW-0479">Metal-binding</keyword>
<keyword id="KW-0488">Methylation</keyword>
<keyword id="KW-0496">Mitochondrion</keyword>
<keyword id="KW-0679">Respiratory chain</keyword>
<keyword id="KW-0813">Transport</keyword>
<organism>
    <name type="scientific">Gossypium barbadense</name>
    <name type="common">Sea Island cotton</name>
    <name type="synonym">Hibiscus barbadensis</name>
    <dbReference type="NCBI Taxonomy" id="3634"/>
    <lineage>
        <taxon>Eukaryota</taxon>
        <taxon>Viridiplantae</taxon>
        <taxon>Streptophyta</taxon>
        <taxon>Embryophyta</taxon>
        <taxon>Tracheophyta</taxon>
        <taxon>Spermatophyta</taxon>
        <taxon>Magnoliopsida</taxon>
        <taxon>eudicotyledons</taxon>
        <taxon>Gunneridae</taxon>
        <taxon>Pentapetalae</taxon>
        <taxon>rosids</taxon>
        <taxon>malvids</taxon>
        <taxon>Malvales</taxon>
        <taxon>Malvaceae</taxon>
        <taxon>Malvoideae</taxon>
        <taxon>Gossypium</taxon>
    </lineage>
</organism>
<sequence>ASFQZAPPGBAKAGEKIFKTKCAQCHTVDKGAGHKQGPNLNGLFGRQSGTTAGYSYSAANKNMAVQWGENTLYDYLLNPKKYIPGTKMVFPGLKKPQDRADLIAYLKZSTA</sequence>
<protein>
    <recommendedName>
        <fullName>Cytochrome c</fullName>
    </recommendedName>
</protein>
<name>CYC_GOSBA</name>
<feature type="chain" id="PRO_0000108297" description="Cytochrome c">
    <location>
        <begin position="1"/>
        <end position="111"/>
    </location>
</feature>
<feature type="binding site" description="covalent" evidence="1 2">
    <location>
        <position position="22"/>
    </location>
    <ligand>
        <name>heme c</name>
        <dbReference type="ChEBI" id="CHEBI:61717"/>
    </ligand>
</feature>
<feature type="binding site" description="covalent" evidence="1 2">
    <location>
        <position position="25"/>
    </location>
    <ligand>
        <name>heme c</name>
        <dbReference type="ChEBI" id="CHEBI:61717"/>
    </ligand>
</feature>
<feature type="binding site" description="axial binding residue">
    <location>
        <position position="26"/>
    </location>
    <ligand>
        <name>heme c</name>
        <dbReference type="ChEBI" id="CHEBI:61717"/>
    </ligand>
    <ligandPart>
        <name>Fe</name>
        <dbReference type="ChEBI" id="CHEBI:18248"/>
    </ligandPart>
</feature>
<feature type="binding site" description="axial binding residue">
    <location>
        <position position="88"/>
    </location>
    <ligand>
        <name>heme c</name>
        <dbReference type="ChEBI" id="CHEBI:61717"/>
    </ligand>
    <ligandPart>
        <name>Fe</name>
        <dbReference type="ChEBI" id="CHEBI:18248"/>
    </ligandPart>
</feature>
<feature type="modified residue" description="N-acetylalanine" evidence="2">
    <location>
        <position position="1"/>
    </location>
</feature>
<feature type="modified residue" description="N6,N6,N6-trimethyllysine" evidence="2">
    <location>
        <position position="80"/>
    </location>
</feature>
<feature type="modified residue" description="N6,N6,N6-trimethyllysine" evidence="2">
    <location>
        <position position="94"/>
    </location>
</feature>
<proteinExistence type="evidence at protein level"/>
<dbReference type="PIR" id="A00051">
    <property type="entry name" value="CCCN"/>
</dbReference>
<dbReference type="iPTMnet" id="P00058"/>
<dbReference type="GO" id="GO:0005758">
    <property type="term" value="C:mitochondrial intermembrane space"/>
    <property type="evidence" value="ECO:0007669"/>
    <property type="project" value="UniProtKB-SubCell"/>
</dbReference>
<dbReference type="GO" id="GO:0009055">
    <property type="term" value="F:electron transfer activity"/>
    <property type="evidence" value="ECO:0007669"/>
    <property type="project" value="InterPro"/>
</dbReference>
<dbReference type="GO" id="GO:0020037">
    <property type="term" value="F:heme binding"/>
    <property type="evidence" value="ECO:0007669"/>
    <property type="project" value="InterPro"/>
</dbReference>
<dbReference type="GO" id="GO:0046872">
    <property type="term" value="F:metal ion binding"/>
    <property type="evidence" value="ECO:0007669"/>
    <property type="project" value="UniProtKB-KW"/>
</dbReference>
<dbReference type="FunFam" id="1.10.760.10:FF:000001">
    <property type="entry name" value="Cytochrome c iso-1"/>
    <property type="match status" value="1"/>
</dbReference>
<dbReference type="Gene3D" id="1.10.760.10">
    <property type="entry name" value="Cytochrome c-like domain"/>
    <property type="match status" value="1"/>
</dbReference>
<dbReference type="InterPro" id="IPR009056">
    <property type="entry name" value="Cyt_c-like_dom"/>
</dbReference>
<dbReference type="InterPro" id="IPR036909">
    <property type="entry name" value="Cyt_c-like_dom_sf"/>
</dbReference>
<dbReference type="InterPro" id="IPR002327">
    <property type="entry name" value="Cyt_c_1A/1B"/>
</dbReference>
<dbReference type="PANTHER" id="PTHR11961">
    <property type="entry name" value="CYTOCHROME C"/>
    <property type="match status" value="1"/>
</dbReference>
<dbReference type="Pfam" id="PF00034">
    <property type="entry name" value="Cytochrom_C"/>
    <property type="match status" value="1"/>
</dbReference>
<dbReference type="PRINTS" id="PR00604">
    <property type="entry name" value="CYTCHRMECIAB"/>
</dbReference>
<dbReference type="SUPFAM" id="SSF46626">
    <property type="entry name" value="Cytochrome c"/>
    <property type="match status" value="1"/>
</dbReference>
<dbReference type="PROSITE" id="PS51007">
    <property type="entry name" value="CYTC"/>
    <property type="match status" value="1"/>
</dbReference>
<accession>P00058</accession>